<reference key="1">
    <citation type="journal article" date="2011" name="J. Bacteriol.">
        <title>Comparative genomics of 28 Salmonella enterica isolates: evidence for CRISPR-mediated adaptive sublineage evolution.</title>
        <authorList>
            <person name="Fricke W.F."/>
            <person name="Mammel M.K."/>
            <person name="McDermott P.F."/>
            <person name="Tartera C."/>
            <person name="White D.G."/>
            <person name="Leclerc J.E."/>
            <person name="Ravel J."/>
            <person name="Cebula T.A."/>
        </authorList>
    </citation>
    <scope>NUCLEOTIDE SEQUENCE [LARGE SCALE GENOMIC DNA]</scope>
    <source>
        <strain>SL476</strain>
    </source>
</reference>
<gene>
    <name evidence="1" type="primary">yjjB</name>
    <name type="ordered locus">SeHA_C4953</name>
</gene>
<dbReference type="EMBL" id="CP001120">
    <property type="protein sequence ID" value="ACF65874.1"/>
    <property type="molecule type" value="Genomic_DNA"/>
</dbReference>
<dbReference type="RefSeq" id="WP_000511329.1">
    <property type="nucleotide sequence ID" value="NC_011083.1"/>
</dbReference>
<dbReference type="KEGG" id="seh:SeHA_C4953"/>
<dbReference type="HOGENOM" id="CLU_117642_1_0_6"/>
<dbReference type="Proteomes" id="UP000001866">
    <property type="component" value="Chromosome"/>
</dbReference>
<dbReference type="GO" id="GO:0005886">
    <property type="term" value="C:plasma membrane"/>
    <property type="evidence" value="ECO:0007669"/>
    <property type="project" value="UniProtKB-SubCell"/>
</dbReference>
<dbReference type="GO" id="GO:0015744">
    <property type="term" value="P:succinate transport"/>
    <property type="evidence" value="ECO:0007669"/>
    <property type="project" value="UniProtKB-UniRule"/>
</dbReference>
<dbReference type="HAMAP" id="MF_01191">
    <property type="entry name" value="YjjB"/>
    <property type="match status" value="1"/>
</dbReference>
<dbReference type="InterPro" id="IPR024528">
    <property type="entry name" value="ThrE_2"/>
</dbReference>
<dbReference type="InterPro" id="IPR050539">
    <property type="entry name" value="ThrE_Dicarb/AminoAcid_Exp"/>
</dbReference>
<dbReference type="InterPro" id="IPR020914">
    <property type="entry name" value="YjjB"/>
</dbReference>
<dbReference type="NCBIfam" id="NF007391">
    <property type="entry name" value="PRK09917.1"/>
    <property type="match status" value="1"/>
</dbReference>
<dbReference type="PANTHER" id="PTHR34390:SF1">
    <property type="entry name" value="SUCCINATE TRANSPORTER SUBUNIT YJJB-RELATED"/>
    <property type="match status" value="1"/>
</dbReference>
<dbReference type="PANTHER" id="PTHR34390">
    <property type="entry name" value="UPF0442 PROTEIN YJJB-RELATED"/>
    <property type="match status" value="1"/>
</dbReference>
<dbReference type="Pfam" id="PF12821">
    <property type="entry name" value="ThrE_2"/>
    <property type="match status" value="1"/>
</dbReference>
<name>YJJB_SALHS</name>
<comment type="function">
    <text evidence="1">Involved in succinate export with YjjP. Both proteins are required for export.</text>
</comment>
<comment type="subunit">
    <text evidence="1">The transporter is composed of YjjB and YjjP.</text>
</comment>
<comment type="subcellular location">
    <subcellularLocation>
        <location evidence="1">Cell inner membrane</location>
        <topology evidence="1">Multi-pass membrane protein</topology>
    </subcellularLocation>
</comment>
<comment type="similarity">
    <text evidence="1">Belongs to the ThrE exporter (TC 2.A.79) family.</text>
</comment>
<accession>B4TGY0</accession>
<proteinExistence type="inferred from homology"/>
<feature type="chain" id="PRO_1000138373" description="Probable succinate transporter subunit YjjB">
    <location>
        <begin position="1"/>
        <end position="157"/>
    </location>
</feature>
<feature type="transmembrane region" description="Helical" evidence="1">
    <location>
        <begin position="8"/>
        <end position="28"/>
    </location>
</feature>
<feature type="transmembrane region" description="Helical" evidence="1">
    <location>
        <begin position="55"/>
        <end position="75"/>
    </location>
</feature>
<feature type="transmembrane region" description="Helical" evidence="1">
    <location>
        <begin position="87"/>
        <end position="107"/>
    </location>
</feature>
<feature type="transmembrane region" description="Helical" evidence="1">
    <location>
        <begin position="129"/>
        <end position="149"/>
    </location>
</feature>
<organism>
    <name type="scientific">Salmonella heidelberg (strain SL476)</name>
    <dbReference type="NCBI Taxonomy" id="454169"/>
    <lineage>
        <taxon>Bacteria</taxon>
        <taxon>Pseudomonadati</taxon>
        <taxon>Pseudomonadota</taxon>
        <taxon>Gammaproteobacteria</taxon>
        <taxon>Enterobacterales</taxon>
        <taxon>Enterobacteriaceae</taxon>
        <taxon>Salmonella</taxon>
    </lineage>
</organism>
<keyword id="KW-0997">Cell inner membrane</keyword>
<keyword id="KW-1003">Cell membrane</keyword>
<keyword id="KW-0472">Membrane</keyword>
<keyword id="KW-0812">Transmembrane</keyword>
<keyword id="KW-1133">Transmembrane helix</keyword>
<keyword id="KW-0813">Transport</keyword>
<protein>
    <recommendedName>
        <fullName evidence="1">Probable succinate transporter subunit YjjB</fullName>
    </recommendedName>
</protein>
<sequence length="157" mass="17116">MGIIDFLLALMQDMILSAIPAVGFAMVFNVPHRALPWCALLGALGHGSRMLMMSAGFNIEWSTFMASLLVGSIGIQWSRWYLAHPKVFTVAAVIPMFPGISAYTAMISAVKISHLGYSEPMMITLLTNFLKASSIVGALSIGLSVPGLWLYRKRPRV</sequence>
<evidence type="ECO:0000255" key="1">
    <source>
        <dbReference type="HAMAP-Rule" id="MF_01191"/>
    </source>
</evidence>